<name>RASP3_TOXGG</name>
<dbReference type="EMBL" id="AAQM03000319">
    <property type="protein sequence ID" value="EPR57542.1"/>
    <property type="molecule type" value="Genomic_DNA"/>
</dbReference>
<dbReference type="EnsemblProtists" id="EPR57542">
    <property type="protein sequence ID" value="EPR57542"/>
    <property type="gene ID" value="TGGT1_306490"/>
</dbReference>
<dbReference type="VEuPathDB" id="ToxoDB:TGGT1_306490"/>
<dbReference type="OrthoDB" id="3474at5809"/>
<dbReference type="Proteomes" id="UP000005641">
    <property type="component" value="Unassembled WGS sequence"/>
</dbReference>
<dbReference type="GO" id="GO:0031410">
    <property type="term" value="C:cytoplasmic vesicle"/>
    <property type="evidence" value="ECO:0007669"/>
    <property type="project" value="UniProtKB-KW"/>
</dbReference>
<dbReference type="GO" id="GO:0033016">
    <property type="term" value="C:rhoptry membrane"/>
    <property type="evidence" value="ECO:0007669"/>
    <property type="project" value="UniProtKB-SubCell"/>
</dbReference>
<dbReference type="Gene3D" id="1.10.3970.10">
    <property type="entry name" value="BSD domain"/>
    <property type="match status" value="1"/>
</dbReference>
<dbReference type="InterPro" id="IPR005607">
    <property type="entry name" value="BSD_dom"/>
</dbReference>
<dbReference type="InterPro" id="IPR035925">
    <property type="entry name" value="BSD_dom_sf"/>
</dbReference>
<dbReference type="PROSITE" id="PS50858">
    <property type="entry name" value="BSD"/>
    <property type="match status" value="1"/>
</dbReference>
<proteinExistence type="evidence at protein level"/>
<evidence type="ECO:0000255" key="1">
    <source>
        <dbReference type="PROSITE-ProRule" id="PRU00036"/>
    </source>
</evidence>
<evidence type="ECO:0000256" key="2">
    <source>
        <dbReference type="SAM" id="MobiDB-lite"/>
    </source>
</evidence>
<evidence type="ECO:0000269" key="3">
    <source>
    </source>
</evidence>
<evidence type="ECO:0000303" key="4">
    <source>
    </source>
</evidence>
<evidence type="ECO:0000305" key="5"/>
<evidence type="ECO:0000312" key="6">
    <source>
        <dbReference type="EMBL" id="EPR57542.1"/>
    </source>
</evidence>
<evidence type="ECO:0000312" key="7">
    <source>
        <dbReference type="Proteomes" id="UP000005641"/>
    </source>
</evidence>
<sequence>MENRPRQQTSGHDCSLGTGDDLSSRPGRVDLLRAHISPTTVKQVSVNHERKVVGSSSSRSAVWGISPDGSNAFESKNFGLEGDSNHTVEHEVIKEEDSQKKSPFSCGSAPRVVDSPGASVVSREGRVGPPSDGSAVVSGDDETDANNSEDGTEDEIVSEEGRRTEDEGDVTSRSDQVPCTPPPMWVPEVLSDESEETPLRRVGEERHVSDSSSGGDGYLRGTRQGRVRPHAVPPLFHTPSHFTPVRATSSRLISLSSDSERMHRMAQKVQTQPEMKPKELDKEAERKQEQLRSSKGDNKGIFKGLLRQLTRGYTGVAHLFDGLASDFKPHTENEGSSSNDVLTEERTVQPSSAVVSDKRVTGNGTGVERFKPRVRHRLSQECRPSFPEKPDEETSLSTTLPTKLKSLFSFASSHWNHASPGEGEATEAAGASVSGSSSFLAANANHSPSMLDAYGRPPQKRTQRRSFFGSVAAAASNAFAEAGAVAAAAAEAVAAVGQSSSDSSGDSSSESDHSGRERSRAFRGKRGGSNEITTMRSQRSAGHLSFSREPERESDQGEMTPTGETSGSESELDQVILTEHATPFNFVLWATREAAASLQRPLLSGPPEEEAGNAEELRSTENAIHRRELQRLGRLRAVALRLLLLICEDDSWCQDGTTRQSAHKGANDGARRRFPPIVQGVRGRRRSDRDTESPPTEATQDSEEVDRLWSQWINGSPETEGGEDADRKQEEKRLQGRGVSRSRYMWKAANRMLSVDRRLRKLHSDTAVRRMGETEFWKLYFYQVFLLMNRFDRQAHKVLRSLSCSFTLTTGEGGDENQPQEVAHDVLSQTSGFTESDTSSPSPSYGFASSPCTSARLIIPPTGLPDNTEEGEPLSFGGVSLEPKDEEAPEQVRQDGLGALAYAIFSSSRSPSLSSSSSGTTSVSARGTGSSFSRDVGESPLLVPRDSHRSGVGSETYSAGGDSPALREKVISENAGCLPLGRAPSQPTNTVSSVSSNRAYLEPASRRGSFSVVPVSGRRLRDALFAKRVSSSSQVNGRVSTSRGTMGEDRHQDQQGDNRLEGPSHLSAHNSLYQLGSRSGNCVQIKVKELKELDGTCGDTHQPGLACKGKEVQGARA</sequence>
<gene>
    <name evidence="4" type="primary">RASP3</name>
    <name evidence="6" type="ORF">TGGT1_306490</name>
</gene>
<keyword id="KW-0968">Cytoplasmic vesicle</keyword>
<keyword id="KW-0472">Membrane</keyword>
<accession>S7UIF3</accession>
<feature type="chain" id="PRO_0000456210" description="Rhoptry apical surface protein 3">
    <location>
        <begin position="1"/>
        <end position="1117"/>
    </location>
</feature>
<feature type="domain" description="BSD" evidence="1">
    <location>
        <begin position="752"/>
        <end position="788"/>
    </location>
</feature>
<feature type="region of interest" description="Disordered" evidence="2">
    <location>
        <begin position="1"/>
        <end position="27"/>
    </location>
</feature>
<feature type="region of interest" description="Disordered" evidence="2">
    <location>
        <begin position="47"/>
        <end position="243"/>
    </location>
</feature>
<feature type="region of interest" description="Disordered" evidence="2">
    <location>
        <begin position="258"/>
        <end position="301"/>
    </location>
</feature>
<feature type="region of interest" description="Disordered" evidence="2">
    <location>
        <begin position="325"/>
        <end position="398"/>
    </location>
</feature>
<feature type="region of interest" description="Disordered" evidence="2">
    <location>
        <begin position="415"/>
        <end position="442"/>
    </location>
</feature>
<feature type="region of interest" description="Disordered" evidence="2">
    <location>
        <begin position="490"/>
        <end position="572"/>
    </location>
</feature>
<feature type="region of interest" description="Disordered" evidence="2">
    <location>
        <begin position="600"/>
        <end position="619"/>
    </location>
</feature>
<feature type="region of interest" description="Disordered" evidence="2">
    <location>
        <begin position="654"/>
        <end position="736"/>
    </location>
</feature>
<feature type="region of interest" description="Disordered" evidence="2">
    <location>
        <begin position="829"/>
        <end position="848"/>
    </location>
</feature>
<feature type="region of interest" description="Disordered" evidence="2">
    <location>
        <begin position="858"/>
        <end position="891"/>
    </location>
</feature>
<feature type="region of interest" description="Disordered" evidence="2">
    <location>
        <begin position="909"/>
        <end position="964"/>
    </location>
</feature>
<feature type="region of interest" description="Disordered" evidence="2">
    <location>
        <begin position="1031"/>
        <end position="1066"/>
    </location>
</feature>
<feature type="region of interest" description="Disordered" evidence="2">
    <location>
        <begin position="1095"/>
        <end position="1117"/>
    </location>
</feature>
<feature type="compositionally biased region" description="Polar residues" evidence="2">
    <location>
        <begin position="1"/>
        <end position="12"/>
    </location>
</feature>
<feature type="compositionally biased region" description="Basic and acidic residues" evidence="2">
    <location>
        <begin position="83"/>
        <end position="100"/>
    </location>
</feature>
<feature type="compositionally biased region" description="Basic and acidic residues" evidence="2">
    <location>
        <begin position="197"/>
        <end position="209"/>
    </location>
</feature>
<feature type="compositionally biased region" description="Basic and acidic residues" evidence="2">
    <location>
        <begin position="275"/>
        <end position="300"/>
    </location>
</feature>
<feature type="compositionally biased region" description="Low complexity" evidence="2">
    <location>
        <begin position="418"/>
        <end position="442"/>
    </location>
</feature>
<feature type="compositionally biased region" description="Low complexity" evidence="2">
    <location>
        <begin position="490"/>
        <end position="508"/>
    </location>
</feature>
<feature type="compositionally biased region" description="Basic and acidic residues" evidence="2">
    <location>
        <begin position="510"/>
        <end position="520"/>
    </location>
</feature>
<feature type="compositionally biased region" description="Polar residues" evidence="2">
    <location>
        <begin position="530"/>
        <end position="540"/>
    </location>
</feature>
<feature type="compositionally biased region" description="Basic and acidic residues" evidence="2">
    <location>
        <begin position="546"/>
        <end position="555"/>
    </location>
</feature>
<feature type="compositionally biased region" description="Polar residues" evidence="2">
    <location>
        <begin position="557"/>
        <end position="569"/>
    </location>
</feature>
<feature type="compositionally biased region" description="Basic and acidic residues" evidence="2">
    <location>
        <begin position="724"/>
        <end position="734"/>
    </location>
</feature>
<feature type="compositionally biased region" description="Polar residues" evidence="2">
    <location>
        <begin position="829"/>
        <end position="838"/>
    </location>
</feature>
<feature type="compositionally biased region" description="Low complexity" evidence="2">
    <location>
        <begin position="839"/>
        <end position="848"/>
    </location>
</feature>
<feature type="compositionally biased region" description="Low complexity" evidence="2">
    <location>
        <begin position="909"/>
        <end position="931"/>
    </location>
</feature>
<feature type="compositionally biased region" description="Polar residues" evidence="2">
    <location>
        <begin position="1031"/>
        <end position="1044"/>
    </location>
</feature>
<feature type="compositionally biased region" description="Basic and acidic residues" evidence="2">
    <location>
        <begin position="1046"/>
        <end position="1062"/>
    </location>
</feature>
<feature type="compositionally biased region" description="Basic and acidic residues" evidence="2">
    <location>
        <begin position="1108"/>
        <end position="1117"/>
    </location>
</feature>
<comment type="subunit">
    <text evidence="3">Interacts with RASP2.</text>
</comment>
<comment type="subcellular location">
    <subcellularLocation>
        <location evidence="3">Cytoplasmic vesicle</location>
        <location evidence="3">Secretory vesicle</location>
        <location evidence="3">Rhoptry membrane</location>
        <topology evidence="3">Peripheral membrane protein</topology>
        <orientation evidence="3">Cytoplasmic side</orientation>
    </subcellularLocation>
    <text evidence="3">Localizes to the extremity of the neck of the rhoptry.</text>
</comment>
<comment type="developmental stage">
    <text evidence="3">Expressed in tachyzoites (at protein level).</text>
</comment>
<comment type="disruption phenotype">
    <text evidence="3">No defect in tachyzoite growth, intracellular replication and host cell invasion.</text>
</comment>
<reference evidence="7" key="1">
    <citation type="submission" date="2013-05" db="EMBL/GenBank/DDBJ databases">
        <authorList>
            <person name="Sibley D."/>
            <person name="Venepally P."/>
            <person name="Karamycheva S."/>
            <person name="Hadjithomas M."/>
            <person name="Khan A."/>
            <person name="Brunk B."/>
            <person name="Roos D."/>
            <person name="Caler E."/>
            <person name="Lorenzi H."/>
        </authorList>
    </citation>
    <scope>NUCLEOTIDE SEQUENCE [LARGE SCALE GENOMIC DNA]</scope>
    <source>
        <strain evidence="7">ATCC 50853 / GT1</strain>
    </source>
</reference>
<reference evidence="5" key="2">
    <citation type="journal article" date="2019" name="Nat. Commun.">
        <title>A lipid-binding protein mediates rhoptry discharge and invasion in Plasmodium falciparum and Toxoplasma gondii parasites.</title>
        <authorList>
            <person name="Suarez C."/>
            <person name="Lentini G."/>
            <person name="Ramaswamy R."/>
            <person name="Maynadier M."/>
            <person name="Aquilini E."/>
            <person name="Berry-Sterkers L."/>
            <person name="Cipriano M."/>
            <person name="Chen A.L."/>
            <person name="Bradley P."/>
            <person name="Striepen B."/>
            <person name="Boulanger M.J."/>
            <person name="Lebrun M."/>
        </authorList>
    </citation>
    <scope>INTERACTION WITH RASP2</scope>
    <scope>SUBCELLULAR LOCATION</scope>
    <scope>DEVELOPMENTAL STAGE</scope>
    <scope>DISRUPTION PHENOTYPE</scope>
</reference>
<organism evidence="7">
    <name type="scientific">Toxoplasma gondii (strain ATCC 50853 / GT1)</name>
    <dbReference type="NCBI Taxonomy" id="507601"/>
    <lineage>
        <taxon>Eukaryota</taxon>
        <taxon>Sar</taxon>
        <taxon>Alveolata</taxon>
        <taxon>Apicomplexa</taxon>
        <taxon>Conoidasida</taxon>
        <taxon>Coccidia</taxon>
        <taxon>Eucoccidiorida</taxon>
        <taxon>Eimeriorina</taxon>
        <taxon>Sarcocystidae</taxon>
        <taxon>Toxoplasma</taxon>
    </lineage>
</organism>
<protein>
    <recommendedName>
        <fullName evidence="4">Rhoptry apical surface protein 3</fullName>
        <shortName evidence="4">TgRASP3</shortName>
    </recommendedName>
</protein>